<sequence length="156" mass="16911">MQASRSPDDLVKTFKSILKEERFGSQSEIVNALQAEGFSNINQSKVSRMLSKFGAVRTRNAKQEMVYCLPAELGVPTAGSPLKNLVLDVDHNQSMIVVRTSPGAAQLIARLLDSIGKPEGILGTIAGDDTIFICPSSIHSIEDTLETVKSLFNYAD</sequence>
<proteinExistence type="inferred from homology"/>
<reference key="1">
    <citation type="submission" date="2007-10" db="EMBL/GenBank/DDBJ databases">
        <title>Complete sequence of Shewanella pealeana ATCC 700345.</title>
        <authorList>
            <consortium name="US DOE Joint Genome Institute"/>
            <person name="Copeland A."/>
            <person name="Lucas S."/>
            <person name="Lapidus A."/>
            <person name="Barry K."/>
            <person name="Glavina del Rio T."/>
            <person name="Dalin E."/>
            <person name="Tice H."/>
            <person name="Pitluck S."/>
            <person name="Chertkov O."/>
            <person name="Brettin T."/>
            <person name="Bruce D."/>
            <person name="Detter J.C."/>
            <person name="Han C."/>
            <person name="Schmutz J."/>
            <person name="Larimer F."/>
            <person name="Land M."/>
            <person name="Hauser L."/>
            <person name="Kyrpides N."/>
            <person name="Kim E."/>
            <person name="Zhao J.-S.Z."/>
            <person name="Manno D."/>
            <person name="Hawari J."/>
            <person name="Richardson P."/>
        </authorList>
    </citation>
    <scope>NUCLEOTIDE SEQUENCE [LARGE SCALE GENOMIC DNA]</scope>
    <source>
        <strain>ATCC 700345 / ANG-SQ1</strain>
    </source>
</reference>
<protein>
    <recommendedName>
        <fullName evidence="1">Arginine repressor</fullName>
    </recommendedName>
</protein>
<gene>
    <name evidence="1" type="primary">argR</name>
    <name type="ordered locus">Spea_0849</name>
</gene>
<accession>A8H0T9</accession>
<feature type="chain" id="PRO_1000077134" description="Arginine repressor">
    <location>
        <begin position="1"/>
        <end position="156"/>
    </location>
</feature>
<organism>
    <name type="scientific">Shewanella pealeana (strain ATCC 700345 / ANG-SQ1)</name>
    <dbReference type="NCBI Taxonomy" id="398579"/>
    <lineage>
        <taxon>Bacteria</taxon>
        <taxon>Pseudomonadati</taxon>
        <taxon>Pseudomonadota</taxon>
        <taxon>Gammaproteobacteria</taxon>
        <taxon>Alteromonadales</taxon>
        <taxon>Shewanellaceae</taxon>
        <taxon>Shewanella</taxon>
    </lineage>
</organism>
<name>ARGR_SHEPA</name>
<evidence type="ECO:0000255" key="1">
    <source>
        <dbReference type="HAMAP-Rule" id="MF_00173"/>
    </source>
</evidence>
<comment type="function">
    <text evidence="1">Regulates arginine biosynthesis genes.</text>
</comment>
<comment type="pathway">
    <text>Amino-acid biosynthesis; L-arginine biosynthesis [regulation].</text>
</comment>
<comment type="subcellular location">
    <subcellularLocation>
        <location evidence="1">Cytoplasm</location>
    </subcellularLocation>
</comment>
<comment type="similarity">
    <text evidence="1">Belongs to the ArgR family.</text>
</comment>
<keyword id="KW-0028">Amino-acid biosynthesis</keyword>
<keyword id="KW-0055">Arginine biosynthesis</keyword>
<keyword id="KW-0963">Cytoplasm</keyword>
<keyword id="KW-0238">DNA-binding</keyword>
<keyword id="KW-1185">Reference proteome</keyword>
<keyword id="KW-0678">Repressor</keyword>
<keyword id="KW-0804">Transcription</keyword>
<keyword id="KW-0805">Transcription regulation</keyword>
<dbReference type="EMBL" id="CP000851">
    <property type="protein sequence ID" value="ABV86176.1"/>
    <property type="molecule type" value="Genomic_DNA"/>
</dbReference>
<dbReference type="RefSeq" id="WP_012154110.1">
    <property type="nucleotide sequence ID" value="NC_009901.1"/>
</dbReference>
<dbReference type="SMR" id="A8H0T9"/>
<dbReference type="STRING" id="398579.Spea_0849"/>
<dbReference type="KEGG" id="spl:Spea_0849"/>
<dbReference type="eggNOG" id="COG1438">
    <property type="taxonomic scope" value="Bacteria"/>
</dbReference>
<dbReference type="HOGENOM" id="CLU_097103_2_0_6"/>
<dbReference type="OrthoDB" id="7060358at2"/>
<dbReference type="UniPathway" id="UPA00068"/>
<dbReference type="Proteomes" id="UP000002608">
    <property type="component" value="Chromosome"/>
</dbReference>
<dbReference type="GO" id="GO:0005737">
    <property type="term" value="C:cytoplasm"/>
    <property type="evidence" value="ECO:0007669"/>
    <property type="project" value="UniProtKB-SubCell"/>
</dbReference>
<dbReference type="GO" id="GO:0034618">
    <property type="term" value="F:arginine binding"/>
    <property type="evidence" value="ECO:0007669"/>
    <property type="project" value="InterPro"/>
</dbReference>
<dbReference type="GO" id="GO:0003677">
    <property type="term" value="F:DNA binding"/>
    <property type="evidence" value="ECO:0007669"/>
    <property type="project" value="UniProtKB-KW"/>
</dbReference>
<dbReference type="GO" id="GO:0003700">
    <property type="term" value="F:DNA-binding transcription factor activity"/>
    <property type="evidence" value="ECO:0007669"/>
    <property type="project" value="UniProtKB-UniRule"/>
</dbReference>
<dbReference type="GO" id="GO:0006526">
    <property type="term" value="P:L-arginine biosynthetic process"/>
    <property type="evidence" value="ECO:0007669"/>
    <property type="project" value="UniProtKB-UniPathway"/>
</dbReference>
<dbReference type="GO" id="GO:0051259">
    <property type="term" value="P:protein complex oligomerization"/>
    <property type="evidence" value="ECO:0007669"/>
    <property type="project" value="InterPro"/>
</dbReference>
<dbReference type="GO" id="GO:1900079">
    <property type="term" value="P:regulation of arginine biosynthetic process"/>
    <property type="evidence" value="ECO:0007669"/>
    <property type="project" value="UniProtKB-UniRule"/>
</dbReference>
<dbReference type="Gene3D" id="3.30.1360.40">
    <property type="match status" value="1"/>
</dbReference>
<dbReference type="Gene3D" id="1.10.10.10">
    <property type="entry name" value="Winged helix-like DNA-binding domain superfamily/Winged helix DNA-binding domain"/>
    <property type="match status" value="1"/>
</dbReference>
<dbReference type="HAMAP" id="MF_00173">
    <property type="entry name" value="Arg_repressor"/>
    <property type="match status" value="1"/>
</dbReference>
<dbReference type="InterPro" id="IPR001669">
    <property type="entry name" value="Arg_repress"/>
</dbReference>
<dbReference type="InterPro" id="IPR020899">
    <property type="entry name" value="Arg_repress_C"/>
</dbReference>
<dbReference type="InterPro" id="IPR036251">
    <property type="entry name" value="Arg_repress_C_sf"/>
</dbReference>
<dbReference type="InterPro" id="IPR020900">
    <property type="entry name" value="Arg_repress_DNA-bd"/>
</dbReference>
<dbReference type="InterPro" id="IPR036388">
    <property type="entry name" value="WH-like_DNA-bd_sf"/>
</dbReference>
<dbReference type="InterPro" id="IPR036390">
    <property type="entry name" value="WH_DNA-bd_sf"/>
</dbReference>
<dbReference type="NCBIfam" id="TIGR01529">
    <property type="entry name" value="argR_whole"/>
    <property type="match status" value="1"/>
</dbReference>
<dbReference type="NCBIfam" id="NF003457">
    <property type="entry name" value="PRK05066.1"/>
    <property type="match status" value="1"/>
</dbReference>
<dbReference type="PANTHER" id="PTHR34471">
    <property type="entry name" value="ARGININE REPRESSOR"/>
    <property type="match status" value="1"/>
</dbReference>
<dbReference type="PANTHER" id="PTHR34471:SF1">
    <property type="entry name" value="ARGININE REPRESSOR"/>
    <property type="match status" value="1"/>
</dbReference>
<dbReference type="Pfam" id="PF01316">
    <property type="entry name" value="Arg_repressor"/>
    <property type="match status" value="1"/>
</dbReference>
<dbReference type="Pfam" id="PF02863">
    <property type="entry name" value="Arg_repressor_C"/>
    <property type="match status" value="1"/>
</dbReference>
<dbReference type="PRINTS" id="PR01467">
    <property type="entry name" value="ARGREPRESSOR"/>
</dbReference>
<dbReference type="SUPFAM" id="SSF55252">
    <property type="entry name" value="C-terminal domain of arginine repressor"/>
    <property type="match status" value="1"/>
</dbReference>
<dbReference type="SUPFAM" id="SSF46785">
    <property type="entry name" value="Winged helix' DNA-binding domain"/>
    <property type="match status" value="1"/>
</dbReference>